<keyword id="KW-1185">Reference proteome</keyword>
<proteinExistence type="inferred from homology"/>
<protein>
    <recommendedName>
        <fullName evidence="1">UPF0102 protein Cphy_2398</fullName>
    </recommendedName>
</protein>
<dbReference type="EMBL" id="CP000885">
    <property type="protein sequence ID" value="ABX42759.1"/>
    <property type="molecule type" value="Genomic_DNA"/>
</dbReference>
<dbReference type="RefSeq" id="WP_012200413.1">
    <property type="nucleotide sequence ID" value="NC_010001.1"/>
</dbReference>
<dbReference type="SMR" id="A9KLL5"/>
<dbReference type="STRING" id="357809.Cphy_2398"/>
<dbReference type="KEGG" id="cpy:Cphy_2398"/>
<dbReference type="eggNOG" id="COG0792">
    <property type="taxonomic scope" value="Bacteria"/>
</dbReference>
<dbReference type="HOGENOM" id="CLU_115353_1_1_9"/>
<dbReference type="OrthoDB" id="9802516at2"/>
<dbReference type="Proteomes" id="UP000000370">
    <property type="component" value="Chromosome"/>
</dbReference>
<dbReference type="GO" id="GO:0003676">
    <property type="term" value="F:nucleic acid binding"/>
    <property type="evidence" value="ECO:0007669"/>
    <property type="project" value="InterPro"/>
</dbReference>
<dbReference type="CDD" id="cd20736">
    <property type="entry name" value="PoNe_Nuclease"/>
    <property type="match status" value="1"/>
</dbReference>
<dbReference type="Gene3D" id="3.40.1350.10">
    <property type="match status" value="1"/>
</dbReference>
<dbReference type="HAMAP" id="MF_00048">
    <property type="entry name" value="UPF0102"/>
    <property type="match status" value="1"/>
</dbReference>
<dbReference type="InterPro" id="IPR011335">
    <property type="entry name" value="Restrct_endonuc-II-like"/>
</dbReference>
<dbReference type="InterPro" id="IPR011856">
    <property type="entry name" value="tRNA_endonuc-like_dom_sf"/>
</dbReference>
<dbReference type="InterPro" id="IPR003509">
    <property type="entry name" value="UPF0102_YraN-like"/>
</dbReference>
<dbReference type="NCBIfam" id="NF009150">
    <property type="entry name" value="PRK12497.1-3"/>
    <property type="match status" value="1"/>
</dbReference>
<dbReference type="NCBIfam" id="TIGR00252">
    <property type="entry name" value="YraN family protein"/>
    <property type="match status" value="1"/>
</dbReference>
<dbReference type="PANTHER" id="PTHR34039">
    <property type="entry name" value="UPF0102 PROTEIN YRAN"/>
    <property type="match status" value="1"/>
</dbReference>
<dbReference type="PANTHER" id="PTHR34039:SF1">
    <property type="entry name" value="UPF0102 PROTEIN YRAN"/>
    <property type="match status" value="1"/>
</dbReference>
<dbReference type="Pfam" id="PF02021">
    <property type="entry name" value="UPF0102"/>
    <property type="match status" value="1"/>
</dbReference>
<dbReference type="SUPFAM" id="SSF52980">
    <property type="entry name" value="Restriction endonuclease-like"/>
    <property type="match status" value="1"/>
</dbReference>
<feature type="chain" id="PRO_0000336160" description="UPF0102 protein Cphy_2398">
    <location>
        <begin position="1"/>
        <end position="118"/>
    </location>
</feature>
<accession>A9KLL5</accession>
<gene>
    <name type="ordered locus">Cphy_2398</name>
</gene>
<reference key="1">
    <citation type="submission" date="2007-11" db="EMBL/GenBank/DDBJ databases">
        <title>Complete genome sequence of Clostridium phytofermentans ISDg.</title>
        <authorList>
            <person name="Leschine S.B."/>
            <person name="Warnick T.A."/>
            <person name="Blanchard J.L."/>
            <person name="Schnell D.J."/>
            <person name="Petit E.L."/>
            <person name="LaTouf W.G."/>
            <person name="Copeland A."/>
            <person name="Lucas S."/>
            <person name="Lapidus A."/>
            <person name="Barry K."/>
            <person name="Glavina del Rio T."/>
            <person name="Dalin E."/>
            <person name="Tice H."/>
            <person name="Pitluck S."/>
            <person name="Kiss H."/>
            <person name="Brettin T."/>
            <person name="Bruce D."/>
            <person name="Detter J.C."/>
            <person name="Han C."/>
            <person name="Kuske C."/>
            <person name="Schmutz J."/>
            <person name="Larimer F."/>
            <person name="Land M."/>
            <person name="Hauser L."/>
            <person name="Kyrpides N."/>
            <person name="Kim E.A."/>
            <person name="Richardson P."/>
        </authorList>
    </citation>
    <scope>NUCLEOTIDE SEQUENCE [LARGE SCALE GENOMIC DNA]</scope>
    <source>
        <strain>ATCC 700394 / DSM 18823 / ISDg</strain>
    </source>
</reference>
<organism>
    <name type="scientific">Lachnoclostridium phytofermentans (strain ATCC 700394 / DSM 18823 / ISDg)</name>
    <name type="common">Clostridium phytofermentans</name>
    <dbReference type="NCBI Taxonomy" id="357809"/>
    <lineage>
        <taxon>Bacteria</taxon>
        <taxon>Bacillati</taxon>
        <taxon>Bacillota</taxon>
        <taxon>Clostridia</taxon>
        <taxon>Lachnospirales</taxon>
        <taxon>Lachnospiraceae</taxon>
    </lineage>
</organism>
<name>Y2398_LACP7</name>
<evidence type="ECO:0000255" key="1">
    <source>
        <dbReference type="HAMAP-Rule" id="MF_00048"/>
    </source>
</evidence>
<sequence length="118" mass="13745">MNKKVEGLTKETEAANYLSEQGYQILARNYRCRLGEIDIVARENGYLVFVEVKYRTNVEKGFPEEAITIQKQRRITNTAKYYLLVNRLPESTPCRFDVVVMLKEEIRLIKNAFDAYGS</sequence>
<comment type="similarity">
    <text evidence="1">Belongs to the UPF0102 family.</text>
</comment>